<evidence type="ECO:0000255" key="1">
    <source>
        <dbReference type="HAMAP-Rule" id="MF_00081"/>
    </source>
</evidence>
<gene>
    <name evidence="1" type="primary">hrcA</name>
    <name type="ordered locus">llmg_1576</name>
</gene>
<feature type="chain" id="PRO_0000182488" description="Heat-inducible transcription repressor HrcA">
    <location>
        <begin position="1"/>
        <end position="347"/>
    </location>
</feature>
<protein>
    <recommendedName>
        <fullName evidence="1">Heat-inducible transcription repressor HrcA</fullName>
    </recommendedName>
</protein>
<sequence length="347" mass="39922">MITERQRQILNLIVSLYAKDHTPIGSKSLLDSIQASSATIRNDMKALERLGLIQKEHTSSGRIPSVSGYKYFVENVIQLEEFSQNDLFKVMKAFDGDFYRLSDLFKTAAKSLSELTGLTSFVLNAPQRDQQLVSFEMVMLDNHSVLSVITLGTGEVRTNQFILPKSMTEADLAVFSNLVKERLVGKKVIDIHYTLRTEIPQIVQRYFKVTSEVLQLFESIFDDLFKEHLTVAGHKNIFDYATDNLAELYKLFSDDERMLHEIREITNNDEMRAVKFDNDEKFMKNLTIISQKFVIPYRGFGTLTVVGPVEMDYQRTLSVLDLVAKVLTMKLSDYYRYLDGNHYEISK</sequence>
<reference key="1">
    <citation type="journal article" date="1993" name="J. Gen. Microbiol.">
        <title>Cloning and sequence analysis of the dnaK gene region of Lactococcus lactis subsp. lactis.</title>
        <authorList>
            <person name="Eaton T.J."/>
            <person name="Shearman C.A."/>
            <person name="Gasson M.J."/>
        </authorList>
    </citation>
    <scope>NUCLEOTIDE SEQUENCE [GENOMIC DNA]</scope>
</reference>
<reference key="2">
    <citation type="journal article" date="2007" name="J. Bacteriol.">
        <title>The complete genome sequence of the lactic acid bacterial paradigm Lactococcus lactis subsp. cremoris MG1363.</title>
        <authorList>
            <person name="Wegmann U."/>
            <person name="O'Connell-Motherway M."/>
            <person name="Zomer A."/>
            <person name="Buist G."/>
            <person name="Shearman C."/>
            <person name="Canchaya C."/>
            <person name="Ventura M."/>
            <person name="Goesmann A."/>
            <person name="Gasson M.J."/>
            <person name="Kuipers O.P."/>
            <person name="van Sinderen D."/>
            <person name="Kok J."/>
        </authorList>
    </citation>
    <scope>NUCLEOTIDE SEQUENCE [LARGE SCALE GENOMIC DNA]</scope>
    <source>
        <strain>MG1363</strain>
    </source>
</reference>
<name>HRCA_LACLM</name>
<dbReference type="EMBL" id="X76642">
    <property type="protein sequence ID" value="CAA54087.1"/>
    <property type="molecule type" value="Genomic_DNA"/>
</dbReference>
<dbReference type="EMBL" id="AM406671">
    <property type="protein sequence ID" value="CAL98151.1"/>
    <property type="molecule type" value="Genomic_DNA"/>
</dbReference>
<dbReference type="PIR" id="S40082">
    <property type="entry name" value="S40082"/>
</dbReference>
<dbReference type="RefSeq" id="WP_011835410.1">
    <property type="nucleotide sequence ID" value="NC_009004.1"/>
</dbReference>
<dbReference type="SMR" id="P42370"/>
<dbReference type="STRING" id="416870.llmg_1576"/>
<dbReference type="KEGG" id="llm:llmg_1576"/>
<dbReference type="eggNOG" id="COG1420">
    <property type="taxonomic scope" value="Bacteria"/>
</dbReference>
<dbReference type="HOGENOM" id="CLU_050019_1_0_9"/>
<dbReference type="OrthoDB" id="9783139at2"/>
<dbReference type="PhylomeDB" id="P42370"/>
<dbReference type="Proteomes" id="UP000000364">
    <property type="component" value="Chromosome"/>
</dbReference>
<dbReference type="GO" id="GO:0003677">
    <property type="term" value="F:DNA binding"/>
    <property type="evidence" value="ECO:0007669"/>
    <property type="project" value="InterPro"/>
</dbReference>
<dbReference type="GO" id="GO:0045892">
    <property type="term" value="P:negative regulation of DNA-templated transcription"/>
    <property type="evidence" value="ECO:0007669"/>
    <property type="project" value="UniProtKB-UniRule"/>
</dbReference>
<dbReference type="Gene3D" id="3.30.450.40">
    <property type="match status" value="1"/>
</dbReference>
<dbReference type="Gene3D" id="3.30.390.60">
    <property type="entry name" value="Heat-inducible transcription repressor hrca homolog, domain 3"/>
    <property type="match status" value="1"/>
</dbReference>
<dbReference type="Gene3D" id="1.10.10.10">
    <property type="entry name" value="Winged helix-like DNA-binding domain superfamily/Winged helix DNA-binding domain"/>
    <property type="match status" value="1"/>
</dbReference>
<dbReference type="HAMAP" id="MF_00081">
    <property type="entry name" value="HrcA"/>
    <property type="match status" value="1"/>
</dbReference>
<dbReference type="InterPro" id="IPR029016">
    <property type="entry name" value="GAF-like_dom_sf"/>
</dbReference>
<dbReference type="InterPro" id="IPR002571">
    <property type="entry name" value="HrcA"/>
</dbReference>
<dbReference type="InterPro" id="IPR021153">
    <property type="entry name" value="HrcA_C"/>
</dbReference>
<dbReference type="InterPro" id="IPR036388">
    <property type="entry name" value="WH-like_DNA-bd_sf"/>
</dbReference>
<dbReference type="InterPro" id="IPR036390">
    <property type="entry name" value="WH_DNA-bd_sf"/>
</dbReference>
<dbReference type="InterPro" id="IPR005104">
    <property type="entry name" value="WHTH_HrcA_DNA-bd"/>
</dbReference>
<dbReference type="InterPro" id="IPR023120">
    <property type="entry name" value="WHTH_transcript_rep_HrcA_IDD"/>
</dbReference>
<dbReference type="NCBIfam" id="TIGR00331">
    <property type="entry name" value="hrcA"/>
    <property type="match status" value="1"/>
</dbReference>
<dbReference type="PANTHER" id="PTHR34824">
    <property type="entry name" value="HEAT-INDUCIBLE TRANSCRIPTION REPRESSOR HRCA"/>
    <property type="match status" value="1"/>
</dbReference>
<dbReference type="PANTHER" id="PTHR34824:SF1">
    <property type="entry name" value="HEAT-INDUCIBLE TRANSCRIPTION REPRESSOR HRCA"/>
    <property type="match status" value="1"/>
</dbReference>
<dbReference type="Pfam" id="PF01628">
    <property type="entry name" value="HrcA"/>
    <property type="match status" value="1"/>
</dbReference>
<dbReference type="Pfam" id="PF03444">
    <property type="entry name" value="HrcA_DNA-bdg"/>
    <property type="match status" value="1"/>
</dbReference>
<dbReference type="PIRSF" id="PIRSF005485">
    <property type="entry name" value="HrcA"/>
    <property type="match status" value="1"/>
</dbReference>
<dbReference type="SUPFAM" id="SSF55781">
    <property type="entry name" value="GAF domain-like"/>
    <property type="match status" value="1"/>
</dbReference>
<dbReference type="SUPFAM" id="SSF46785">
    <property type="entry name" value="Winged helix' DNA-binding domain"/>
    <property type="match status" value="1"/>
</dbReference>
<proteinExistence type="inferred from homology"/>
<keyword id="KW-0678">Repressor</keyword>
<keyword id="KW-0346">Stress response</keyword>
<keyword id="KW-0804">Transcription</keyword>
<keyword id="KW-0805">Transcription regulation</keyword>
<organism>
    <name type="scientific">Lactococcus lactis subsp. cremoris (strain MG1363)</name>
    <dbReference type="NCBI Taxonomy" id="416870"/>
    <lineage>
        <taxon>Bacteria</taxon>
        <taxon>Bacillati</taxon>
        <taxon>Bacillota</taxon>
        <taxon>Bacilli</taxon>
        <taxon>Lactobacillales</taxon>
        <taxon>Streptococcaceae</taxon>
        <taxon>Lactococcus</taxon>
        <taxon>Lactococcus cremoris subsp. cremoris</taxon>
    </lineage>
</organism>
<comment type="function">
    <text evidence="1">Negative regulator of class I heat shock genes (grpE-dnaK-dnaJ and groELS operons). Prevents heat-shock induction of these operons.</text>
</comment>
<comment type="similarity">
    <text evidence="1">Belongs to the HrcA family.</text>
</comment>
<accession>P42370</accession>
<accession>A2RLI3</accession>